<keyword id="KW-0224">Dipeptidase</keyword>
<keyword id="KW-0378">Hydrolase</keyword>
<keyword id="KW-0645">Protease</keyword>
<sequence length="473" mass="53703">MTDRIELSACTSMMVGKNASIDGSTMISRNEDRFYAIHPKRFFVQPAVHNRHETYVSKYNGLTMPLPEEGYRYTSTPNGDLSDGLNEEDGINEKNVALSATESVYANERVLAYDPLIKNGLAEDSMCSLVLPYINSAREGVKLMGDIVTKYGSAEGNGIQYSDENEVWYQEIVTGHHWVAAKIPDDCYAVAANQVAIENIDFNDPDNYMWSEGIQEFVSGNHLNPSETEWNFRKIFGTDTEKDRHYNTPRVWYAQRYLNPEIKQEPESSDLPFIRKANRKLSVEDVQYVLKSHYNETEYDPLGNGTEEQKTTYRAISLSRTQNSHICQIRNNVPDAVKGVQWLGFGVPTFCPHVPFFTNANDTDETYRELPEKMTLKNAYWLHEALAMIVESHYGAFKQADIDYQKALSEWARTKIAATDKAIENQADAVAFLTAQNHEIATHYNEATTDLLAQLVTEGTQLSKLTFVMDKNL</sequence>
<organism>
    <name type="scientific">Latilactobacillus sakei</name>
    <name type="common">Lactobacillus sakei</name>
    <dbReference type="NCBI Taxonomy" id="1599"/>
    <lineage>
        <taxon>Bacteria</taxon>
        <taxon>Bacillati</taxon>
        <taxon>Bacillota</taxon>
        <taxon>Bacilli</taxon>
        <taxon>Lactobacillales</taxon>
        <taxon>Lactobacillaceae</taxon>
        <taxon>Latilactobacillus</taxon>
    </lineage>
</organism>
<accession>Q48841</accession>
<comment type="catalytic activity">
    <reaction>
        <text>an L-aminoacyl-L-amino acid + H2O = 2 an L-alpha-amino acid</text>
        <dbReference type="Rhea" id="RHEA:48940"/>
        <dbReference type="ChEBI" id="CHEBI:15377"/>
        <dbReference type="ChEBI" id="CHEBI:59869"/>
        <dbReference type="ChEBI" id="CHEBI:77460"/>
        <dbReference type="EC" id="3.4.13.19"/>
    </reaction>
</comment>
<comment type="similarity">
    <text evidence="2">Belongs to the peptidase C69 family.</text>
</comment>
<dbReference type="EC" id="3.4.13.19"/>
<dbReference type="EMBL" id="X98238">
    <property type="protein sequence ID" value="CAA66893.1"/>
    <property type="molecule type" value="Genomic_DNA"/>
</dbReference>
<dbReference type="SMR" id="Q48841"/>
<dbReference type="MEROPS" id="C69.001"/>
<dbReference type="GO" id="GO:0070004">
    <property type="term" value="F:cysteine-type exopeptidase activity"/>
    <property type="evidence" value="ECO:0007669"/>
    <property type="project" value="InterPro"/>
</dbReference>
<dbReference type="GO" id="GO:0016805">
    <property type="term" value="F:dipeptidase activity"/>
    <property type="evidence" value="ECO:0007669"/>
    <property type="project" value="UniProtKB-KW"/>
</dbReference>
<dbReference type="GO" id="GO:0006508">
    <property type="term" value="P:proteolysis"/>
    <property type="evidence" value="ECO:0007669"/>
    <property type="project" value="UniProtKB-KW"/>
</dbReference>
<dbReference type="Gene3D" id="3.60.60.10">
    <property type="entry name" value="Penicillin V Acylase, Chain A"/>
    <property type="match status" value="1"/>
</dbReference>
<dbReference type="InterPro" id="IPR047804">
    <property type="entry name" value="C69_dipept_A-like"/>
</dbReference>
<dbReference type="InterPro" id="IPR005322">
    <property type="entry name" value="Peptidase_C69"/>
</dbReference>
<dbReference type="NCBIfam" id="NF033678">
    <property type="entry name" value="C69_fam_dipept"/>
    <property type="match status" value="1"/>
</dbReference>
<dbReference type="PANTHER" id="PTHR12994:SF17">
    <property type="entry name" value="LD30995P"/>
    <property type="match status" value="1"/>
</dbReference>
<dbReference type="PANTHER" id="PTHR12994">
    <property type="entry name" value="SECERNIN"/>
    <property type="match status" value="1"/>
</dbReference>
<dbReference type="Pfam" id="PF03577">
    <property type="entry name" value="Peptidase_C69"/>
    <property type="match status" value="1"/>
</dbReference>
<proteinExistence type="inferred from homology"/>
<evidence type="ECO:0000255" key="1"/>
<evidence type="ECO:0000305" key="2"/>
<feature type="chain" id="PRO_0000220384" description="Probable dipeptidase">
    <location>
        <begin position="1"/>
        <end position="473"/>
    </location>
</feature>
<feature type="active site" evidence="1">
    <location>
        <position position="10"/>
    </location>
</feature>
<reference key="1">
    <citation type="submission" date="1996-06" db="EMBL/GenBank/DDBJ databases">
        <title>Isolation, characterization, and disruption of the putative exopolysaccharide gene cluster from Lactobactillus sake 0-1.</title>
        <authorList>
            <person name="van den Berg D.J.C."/>
            <person name="Toonen M.Y."/>
            <person name="Robijn G.W."/>
            <person name="Kamerling J.P."/>
            <person name="Vliegenthart J.F.G."/>
            <person name="van der Swaluw C.D.M."/>
            <person name="Ledoboer A.M."/>
            <person name="Verrips C.T."/>
        </authorList>
    </citation>
    <scope>NUCLEOTIDE SEQUENCE [GENOMIC DNA]</scope>
    <source>
        <strain>CBS 532.92 / 0-1</strain>
    </source>
</reference>
<protein>
    <recommendedName>
        <fullName>Probable dipeptidase</fullName>
        <ecNumber>3.4.13.19</ecNumber>
    </recommendedName>
</protein>
<name>PEPD_LATSK</name>